<protein>
    <recommendedName>
        <fullName>Glutamine synthetase cytosolic isozyme</fullName>
        <ecNumber>6.3.1.2</ecNumber>
    </recommendedName>
    <alternativeName>
        <fullName>GS1</fullName>
    </alternativeName>
    <alternativeName>
        <fullName>Glutamate--ammonia ligase</fullName>
    </alternativeName>
</protein>
<evidence type="ECO:0000250" key="1"/>
<evidence type="ECO:0000255" key="2">
    <source>
        <dbReference type="PROSITE-ProRule" id="PRU01330"/>
    </source>
</evidence>
<evidence type="ECO:0000255" key="3">
    <source>
        <dbReference type="PROSITE-ProRule" id="PRU01331"/>
    </source>
</evidence>
<evidence type="ECO:0000305" key="4"/>
<accession>P52783</accession>
<organism>
    <name type="scientific">Pinus sylvestris</name>
    <name type="common">Scotch pine</name>
    <dbReference type="NCBI Taxonomy" id="3349"/>
    <lineage>
        <taxon>Eukaryota</taxon>
        <taxon>Viridiplantae</taxon>
        <taxon>Streptophyta</taxon>
        <taxon>Embryophyta</taxon>
        <taxon>Tracheophyta</taxon>
        <taxon>Spermatophyta</taxon>
        <taxon>Pinopsida</taxon>
        <taxon>Pinidae</taxon>
        <taxon>Conifers I</taxon>
        <taxon>Pinales</taxon>
        <taxon>Pinaceae</taxon>
        <taxon>Pinus</taxon>
        <taxon>Pinus subgen. Pinus</taxon>
    </lineage>
</organism>
<comment type="catalytic activity">
    <reaction>
        <text>L-glutamate + NH4(+) + ATP = L-glutamine + ADP + phosphate + H(+)</text>
        <dbReference type="Rhea" id="RHEA:16169"/>
        <dbReference type="ChEBI" id="CHEBI:15378"/>
        <dbReference type="ChEBI" id="CHEBI:28938"/>
        <dbReference type="ChEBI" id="CHEBI:29985"/>
        <dbReference type="ChEBI" id="CHEBI:30616"/>
        <dbReference type="ChEBI" id="CHEBI:43474"/>
        <dbReference type="ChEBI" id="CHEBI:58359"/>
        <dbReference type="ChEBI" id="CHEBI:456216"/>
        <dbReference type="EC" id="6.3.1.2"/>
    </reaction>
</comment>
<comment type="subunit">
    <text evidence="1">Homooctamer.</text>
</comment>
<comment type="subcellular location">
    <subcellularLocation>
        <location>Cytoplasm</location>
    </subcellularLocation>
</comment>
<comment type="miscellaneous">
    <text>Irreversibly inhibited by the herbicide L-phosphinothricin (PPT).</text>
</comment>
<comment type="similarity">
    <text evidence="4">Belongs to the glutamine synthetase family.</text>
</comment>
<name>GLNA_PINSY</name>
<reference key="1">
    <citation type="journal article" date="1993" name="Plant Mol. Biol.">
        <title>Molecular characterization of a cDNA clone encoding glutamine synthetase from a gymnosperm, Pinus sylvestris.</title>
        <authorList>
            <person name="Canton F.R."/>
            <person name="Garcia-Gutierrez A."/>
            <person name="Gallardo F."/>
            <person name="de Vicente A."/>
            <person name="Canovas F.M."/>
        </authorList>
    </citation>
    <scope>NUCLEOTIDE SEQUENCE [MRNA]</scope>
</reference>
<reference key="2">
    <citation type="journal article" date="1994" name="Planta">
        <title>Coaction of blue light and light absorbed by phytochrome in control of glutamine synthetase gene expression in Scots pine (Pinus sylvestris L.) seedlings.</title>
        <authorList>
            <person name="Elmlinger M.W."/>
            <person name="Bolle C."/>
            <person name="Batschauer A."/>
            <person name="Oelmueller R."/>
            <person name="Mohr H."/>
        </authorList>
    </citation>
    <scope>NUCLEOTIDE SEQUENCE [MRNA]</scope>
</reference>
<keyword id="KW-0067">ATP-binding</keyword>
<keyword id="KW-0963">Cytoplasm</keyword>
<keyword id="KW-0436">Ligase</keyword>
<keyword id="KW-0547">Nucleotide-binding</keyword>
<dbReference type="EC" id="6.3.1.2"/>
<dbReference type="EMBL" id="X69822">
    <property type="protein sequence ID" value="CAA49476.1"/>
    <property type="molecule type" value="mRNA"/>
</dbReference>
<dbReference type="EMBL" id="X74429">
    <property type="protein sequence ID" value="CAA52448.1"/>
    <property type="molecule type" value="mRNA"/>
</dbReference>
<dbReference type="PIR" id="S36195">
    <property type="entry name" value="S36195"/>
</dbReference>
<dbReference type="SMR" id="P52783"/>
<dbReference type="GO" id="GO:0005737">
    <property type="term" value="C:cytoplasm"/>
    <property type="evidence" value="ECO:0007669"/>
    <property type="project" value="UniProtKB-SubCell"/>
</dbReference>
<dbReference type="GO" id="GO:0005524">
    <property type="term" value="F:ATP binding"/>
    <property type="evidence" value="ECO:0007669"/>
    <property type="project" value="UniProtKB-KW"/>
</dbReference>
<dbReference type="GO" id="GO:0004356">
    <property type="term" value="F:glutamine synthetase activity"/>
    <property type="evidence" value="ECO:0007669"/>
    <property type="project" value="UniProtKB-EC"/>
</dbReference>
<dbReference type="GO" id="GO:0006542">
    <property type="term" value="P:glutamine biosynthetic process"/>
    <property type="evidence" value="ECO:0007669"/>
    <property type="project" value="InterPro"/>
</dbReference>
<dbReference type="FunFam" id="3.10.20.70:FF:000004">
    <property type="entry name" value="Glutamine synthetase"/>
    <property type="match status" value="1"/>
</dbReference>
<dbReference type="FunFam" id="3.30.590.10:FF:000004">
    <property type="entry name" value="Glutamine synthetase"/>
    <property type="match status" value="1"/>
</dbReference>
<dbReference type="Gene3D" id="3.10.20.70">
    <property type="entry name" value="Glutamine synthetase, N-terminal domain"/>
    <property type="match status" value="1"/>
</dbReference>
<dbReference type="Gene3D" id="3.30.590.10">
    <property type="entry name" value="Glutamine synthetase/guanido kinase, catalytic domain"/>
    <property type="match status" value="1"/>
</dbReference>
<dbReference type="InterPro" id="IPR008147">
    <property type="entry name" value="Gln_synt_N"/>
</dbReference>
<dbReference type="InterPro" id="IPR036651">
    <property type="entry name" value="Gln_synt_N_sf"/>
</dbReference>
<dbReference type="InterPro" id="IPR014746">
    <property type="entry name" value="Gln_synth/guanido_kin_cat_dom"/>
</dbReference>
<dbReference type="InterPro" id="IPR008146">
    <property type="entry name" value="Gln_synth_cat_dom"/>
</dbReference>
<dbReference type="InterPro" id="IPR027303">
    <property type="entry name" value="Gln_synth_gly_rich_site"/>
</dbReference>
<dbReference type="InterPro" id="IPR027302">
    <property type="entry name" value="Gln_synth_N_conserv_site"/>
</dbReference>
<dbReference type="InterPro" id="IPR050292">
    <property type="entry name" value="Glutamine_Synthetase"/>
</dbReference>
<dbReference type="PANTHER" id="PTHR20852">
    <property type="entry name" value="GLUTAMINE SYNTHETASE"/>
    <property type="match status" value="1"/>
</dbReference>
<dbReference type="PANTHER" id="PTHR20852:SF116">
    <property type="entry name" value="GLUTAMINE SYNTHETASE"/>
    <property type="match status" value="1"/>
</dbReference>
<dbReference type="Pfam" id="PF00120">
    <property type="entry name" value="Gln-synt_C"/>
    <property type="match status" value="1"/>
</dbReference>
<dbReference type="Pfam" id="PF03951">
    <property type="entry name" value="Gln-synt_N"/>
    <property type="match status" value="1"/>
</dbReference>
<dbReference type="SMART" id="SM01230">
    <property type="entry name" value="Gln-synt_C"/>
    <property type="match status" value="1"/>
</dbReference>
<dbReference type="SUPFAM" id="SSF54368">
    <property type="entry name" value="Glutamine synthetase, N-terminal domain"/>
    <property type="match status" value="1"/>
</dbReference>
<dbReference type="SUPFAM" id="SSF55931">
    <property type="entry name" value="Glutamine synthetase/guanido kinase"/>
    <property type="match status" value="1"/>
</dbReference>
<dbReference type="PROSITE" id="PS00180">
    <property type="entry name" value="GLNA_1"/>
    <property type="match status" value="1"/>
</dbReference>
<dbReference type="PROSITE" id="PS00181">
    <property type="entry name" value="GLNA_ATP"/>
    <property type="match status" value="1"/>
</dbReference>
<dbReference type="PROSITE" id="PS51986">
    <property type="entry name" value="GS_BETA_GRASP"/>
    <property type="match status" value="1"/>
</dbReference>
<dbReference type="PROSITE" id="PS51987">
    <property type="entry name" value="GS_CATALYTIC"/>
    <property type="match status" value="1"/>
</dbReference>
<feature type="chain" id="PRO_0000153195" description="Glutamine synthetase cytosolic isozyme">
    <location>
        <begin position="1"/>
        <end position="357"/>
    </location>
</feature>
<feature type="domain" description="GS beta-grasp" evidence="2">
    <location>
        <begin position="20"/>
        <end position="100"/>
    </location>
</feature>
<feature type="domain" description="GS catalytic" evidence="3">
    <location>
        <begin position="107"/>
        <end position="357"/>
    </location>
</feature>
<feature type="sequence conflict" description="In Ref. 2; CAA52448." evidence="4" ref="2">
    <original>S</original>
    <variation>A</variation>
    <location>
        <position position="183"/>
    </location>
</feature>
<feature type="sequence conflict" description="In Ref. 2; CAA52448." evidence="4" ref="2">
    <original>W</original>
    <variation>R</variation>
    <location>
        <position position="307"/>
    </location>
</feature>
<sequence>MSSVLTDLLNLDLSDVTEKVIAEYIWIGGSGMDMRSKARSLSGPVSSVKELPKWNYDGSSTGQAQGHDSEVILYPQAIFRDPFRRGKHILVICDAYSPNGTAIPSNKRAAAAKIFNEKAVSDEETWYGLEQEYTLLQKDVKWPLGWPIGGYPGPQGPYYCGVGADKAWGRDIVDAHYKACLYSGINISGINGEVMPGQWEFQVGPSVGISAADELWCARFIMERITEKAGVVLSFDPKPIEGDWNGAGCHTNYSTKSMRKEGGFEVIKKAIEKLKLRHKEHISAYGEGNERRLTGRHETADMNTFSWGVANRGASVRVGRDTEKEGKGYFEDRRPASNMDPYIVTSMIAETTILWKP</sequence>
<proteinExistence type="evidence at transcript level"/>